<keyword id="KW-0067">ATP-binding</keyword>
<keyword id="KW-0131">Cell cycle</keyword>
<keyword id="KW-0132">Cell division</keyword>
<keyword id="KW-0133">Cell shape</keyword>
<keyword id="KW-0961">Cell wall biogenesis/degradation</keyword>
<keyword id="KW-0963">Cytoplasm</keyword>
<keyword id="KW-0436">Ligase</keyword>
<keyword id="KW-0547">Nucleotide-binding</keyword>
<keyword id="KW-0573">Peptidoglycan synthesis</keyword>
<dbReference type="EC" id="6.3.2.9" evidence="1"/>
<dbReference type="EMBL" id="CP000090">
    <property type="protein sequence ID" value="AAZ62341.1"/>
    <property type="molecule type" value="Genomic_DNA"/>
</dbReference>
<dbReference type="SMR" id="Q46WZ2"/>
<dbReference type="STRING" id="264198.Reut_A2981"/>
<dbReference type="KEGG" id="reu:Reut_A2981"/>
<dbReference type="eggNOG" id="COG0771">
    <property type="taxonomic scope" value="Bacteria"/>
</dbReference>
<dbReference type="HOGENOM" id="CLU_032540_1_1_4"/>
<dbReference type="OrthoDB" id="9809796at2"/>
<dbReference type="UniPathway" id="UPA00219"/>
<dbReference type="GO" id="GO:0005737">
    <property type="term" value="C:cytoplasm"/>
    <property type="evidence" value="ECO:0007669"/>
    <property type="project" value="UniProtKB-SubCell"/>
</dbReference>
<dbReference type="GO" id="GO:0005524">
    <property type="term" value="F:ATP binding"/>
    <property type="evidence" value="ECO:0007669"/>
    <property type="project" value="UniProtKB-UniRule"/>
</dbReference>
<dbReference type="GO" id="GO:0004326">
    <property type="term" value="F:tetrahydrofolylpolyglutamate synthase activity"/>
    <property type="evidence" value="ECO:0007669"/>
    <property type="project" value="InterPro"/>
</dbReference>
<dbReference type="GO" id="GO:0008764">
    <property type="term" value="F:UDP-N-acetylmuramoylalanine-D-glutamate ligase activity"/>
    <property type="evidence" value="ECO:0007669"/>
    <property type="project" value="UniProtKB-UniRule"/>
</dbReference>
<dbReference type="GO" id="GO:0051301">
    <property type="term" value="P:cell division"/>
    <property type="evidence" value="ECO:0007669"/>
    <property type="project" value="UniProtKB-KW"/>
</dbReference>
<dbReference type="GO" id="GO:0071555">
    <property type="term" value="P:cell wall organization"/>
    <property type="evidence" value="ECO:0007669"/>
    <property type="project" value="UniProtKB-KW"/>
</dbReference>
<dbReference type="GO" id="GO:0009252">
    <property type="term" value="P:peptidoglycan biosynthetic process"/>
    <property type="evidence" value="ECO:0007669"/>
    <property type="project" value="UniProtKB-UniRule"/>
</dbReference>
<dbReference type="GO" id="GO:0008360">
    <property type="term" value="P:regulation of cell shape"/>
    <property type="evidence" value="ECO:0007669"/>
    <property type="project" value="UniProtKB-KW"/>
</dbReference>
<dbReference type="Gene3D" id="3.90.190.20">
    <property type="entry name" value="Mur ligase, C-terminal domain"/>
    <property type="match status" value="1"/>
</dbReference>
<dbReference type="Gene3D" id="3.40.1190.10">
    <property type="entry name" value="Mur-like, catalytic domain"/>
    <property type="match status" value="1"/>
</dbReference>
<dbReference type="Gene3D" id="3.40.50.720">
    <property type="entry name" value="NAD(P)-binding Rossmann-like Domain"/>
    <property type="match status" value="1"/>
</dbReference>
<dbReference type="HAMAP" id="MF_00639">
    <property type="entry name" value="MurD"/>
    <property type="match status" value="1"/>
</dbReference>
<dbReference type="InterPro" id="IPR018109">
    <property type="entry name" value="Folylpolyglutamate_synth_CS"/>
</dbReference>
<dbReference type="InterPro" id="IPR036565">
    <property type="entry name" value="Mur-like_cat_sf"/>
</dbReference>
<dbReference type="InterPro" id="IPR004101">
    <property type="entry name" value="Mur_ligase_C"/>
</dbReference>
<dbReference type="InterPro" id="IPR036615">
    <property type="entry name" value="Mur_ligase_C_dom_sf"/>
</dbReference>
<dbReference type="InterPro" id="IPR013221">
    <property type="entry name" value="Mur_ligase_cen"/>
</dbReference>
<dbReference type="InterPro" id="IPR005762">
    <property type="entry name" value="MurD"/>
</dbReference>
<dbReference type="NCBIfam" id="TIGR01087">
    <property type="entry name" value="murD"/>
    <property type="match status" value="1"/>
</dbReference>
<dbReference type="PANTHER" id="PTHR43692">
    <property type="entry name" value="UDP-N-ACETYLMURAMOYLALANINE--D-GLUTAMATE LIGASE"/>
    <property type="match status" value="1"/>
</dbReference>
<dbReference type="PANTHER" id="PTHR43692:SF1">
    <property type="entry name" value="UDP-N-ACETYLMURAMOYLALANINE--D-GLUTAMATE LIGASE"/>
    <property type="match status" value="1"/>
</dbReference>
<dbReference type="Pfam" id="PF02875">
    <property type="entry name" value="Mur_ligase_C"/>
    <property type="match status" value="1"/>
</dbReference>
<dbReference type="Pfam" id="PF08245">
    <property type="entry name" value="Mur_ligase_M"/>
    <property type="match status" value="1"/>
</dbReference>
<dbReference type="Pfam" id="PF21799">
    <property type="entry name" value="MurD-like_N"/>
    <property type="match status" value="1"/>
</dbReference>
<dbReference type="SUPFAM" id="SSF51984">
    <property type="entry name" value="MurCD N-terminal domain"/>
    <property type="match status" value="1"/>
</dbReference>
<dbReference type="SUPFAM" id="SSF53623">
    <property type="entry name" value="MurD-like peptide ligases, catalytic domain"/>
    <property type="match status" value="1"/>
</dbReference>
<dbReference type="SUPFAM" id="SSF53244">
    <property type="entry name" value="MurD-like peptide ligases, peptide-binding domain"/>
    <property type="match status" value="1"/>
</dbReference>
<reference key="1">
    <citation type="journal article" date="2010" name="PLoS ONE">
        <title>The complete multipartite genome sequence of Cupriavidus necator JMP134, a versatile pollutant degrader.</title>
        <authorList>
            <person name="Lykidis A."/>
            <person name="Perez-Pantoja D."/>
            <person name="Ledger T."/>
            <person name="Mavromatis K."/>
            <person name="Anderson I.J."/>
            <person name="Ivanova N.N."/>
            <person name="Hooper S.D."/>
            <person name="Lapidus A."/>
            <person name="Lucas S."/>
            <person name="Gonzalez B."/>
            <person name="Kyrpides N.C."/>
        </authorList>
    </citation>
    <scope>NUCLEOTIDE SEQUENCE [LARGE SCALE GENOMIC DNA]</scope>
    <source>
        <strain>JMP134 / LMG 1197</strain>
    </source>
</reference>
<comment type="function">
    <text evidence="1">Cell wall formation. Catalyzes the addition of glutamate to the nucleotide precursor UDP-N-acetylmuramoyl-L-alanine (UMA).</text>
</comment>
<comment type="catalytic activity">
    <reaction evidence="1">
        <text>UDP-N-acetyl-alpha-D-muramoyl-L-alanine + D-glutamate + ATP = UDP-N-acetyl-alpha-D-muramoyl-L-alanyl-D-glutamate + ADP + phosphate + H(+)</text>
        <dbReference type="Rhea" id="RHEA:16429"/>
        <dbReference type="ChEBI" id="CHEBI:15378"/>
        <dbReference type="ChEBI" id="CHEBI:29986"/>
        <dbReference type="ChEBI" id="CHEBI:30616"/>
        <dbReference type="ChEBI" id="CHEBI:43474"/>
        <dbReference type="ChEBI" id="CHEBI:83898"/>
        <dbReference type="ChEBI" id="CHEBI:83900"/>
        <dbReference type="ChEBI" id="CHEBI:456216"/>
        <dbReference type="EC" id="6.3.2.9"/>
    </reaction>
</comment>
<comment type="pathway">
    <text evidence="1">Cell wall biogenesis; peptidoglycan biosynthesis.</text>
</comment>
<comment type="subcellular location">
    <subcellularLocation>
        <location evidence="1">Cytoplasm</location>
    </subcellularLocation>
</comment>
<comment type="similarity">
    <text evidence="1">Belongs to the MurCDEF family.</text>
</comment>
<evidence type="ECO:0000255" key="1">
    <source>
        <dbReference type="HAMAP-Rule" id="MF_00639"/>
    </source>
</evidence>
<evidence type="ECO:0000256" key="2">
    <source>
        <dbReference type="SAM" id="MobiDB-lite"/>
    </source>
</evidence>
<name>MURD_CUPPJ</name>
<sequence length="503" mass="52886">MFGELQKPHVLVLGLGESGLAMARWCGLNGCAVRVADTREAPANLVFLQAELMSAEFVGGPFAESLLDGIGLVAISPGLSPLEANTGELLAAARQRGIPVWGEIELFARALAHLQAESGYAPKVLAITGTNGKTTTTALTGRLVERAGKSVAVAGNISPSALDKLSACIASATLPDVWVLELSSFQLETTHTLAPHAATVLNVTQDHLDWHGSMEAYAASKARIFGPAGTACVQVLNRNDRLTMDMARPGTAPVTFGTDLPETPGSFGVLREGGMPWLVLAEPDSEAEGEGKPRRRKADATAQEAVPVRHKRLMPADALHIRGMHNATNAMAALALCRAIDLPLNALLHGLREYRGEPHRVEWVATIDEVEYFDDSKGTNVGATVAALSGLDKRVVLIAGGEGKGQDFSPLAAPVAQYARAVVLIGRAAGELRDALQGSGASLVDAATLEEAVNKAAELAEGGDVVLLSPACASLDMFRNYVHRAEVFRSAVEELALSRGIMP</sequence>
<protein>
    <recommendedName>
        <fullName evidence="1">UDP-N-acetylmuramoylalanine--D-glutamate ligase</fullName>
        <ecNumber evidence="1">6.3.2.9</ecNumber>
    </recommendedName>
    <alternativeName>
        <fullName evidence="1">D-glutamic acid-adding enzyme</fullName>
    </alternativeName>
    <alternativeName>
        <fullName evidence="1">UDP-N-acetylmuramoyl-L-alanyl-D-glutamate synthetase</fullName>
    </alternativeName>
</protein>
<accession>Q46WZ2</accession>
<proteinExistence type="inferred from homology"/>
<organism>
    <name type="scientific">Cupriavidus pinatubonensis (strain JMP 134 / LMG 1197)</name>
    <name type="common">Cupriavidus necator (strain JMP 134)</name>
    <dbReference type="NCBI Taxonomy" id="264198"/>
    <lineage>
        <taxon>Bacteria</taxon>
        <taxon>Pseudomonadati</taxon>
        <taxon>Pseudomonadota</taxon>
        <taxon>Betaproteobacteria</taxon>
        <taxon>Burkholderiales</taxon>
        <taxon>Burkholderiaceae</taxon>
        <taxon>Cupriavidus</taxon>
    </lineage>
</organism>
<feature type="chain" id="PRO_0000257221" description="UDP-N-acetylmuramoylalanine--D-glutamate ligase">
    <location>
        <begin position="1"/>
        <end position="503"/>
    </location>
</feature>
<feature type="region of interest" description="Disordered" evidence="2">
    <location>
        <begin position="284"/>
        <end position="305"/>
    </location>
</feature>
<feature type="binding site" evidence="1">
    <location>
        <begin position="129"/>
        <end position="135"/>
    </location>
    <ligand>
        <name>ATP</name>
        <dbReference type="ChEBI" id="CHEBI:30616"/>
    </ligand>
</feature>
<gene>
    <name evidence="1" type="primary">murD</name>
    <name type="ordered locus">Reut_A2981</name>
</gene>